<name>MIAA_SALHS</name>
<protein>
    <recommendedName>
        <fullName evidence="1">tRNA dimethylallyltransferase</fullName>
        <ecNumber evidence="1">2.5.1.75</ecNumber>
    </recommendedName>
    <alternativeName>
        <fullName evidence="1">Dimethylallyl diphosphate:tRNA dimethylallyltransferase</fullName>
        <shortName evidence="1">DMAPP:tRNA dimethylallyltransferase</shortName>
        <shortName evidence="1">DMATase</shortName>
    </alternativeName>
    <alternativeName>
        <fullName evidence="1">Isopentenyl-diphosphate:tRNA isopentenyltransferase</fullName>
        <shortName evidence="1">IPP transferase</shortName>
        <shortName evidence="1">IPPT</shortName>
        <shortName evidence="1">IPTase</shortName>
    </alternativeName>
</protein>
<reference key="1">
    <citation type="journal article" date="2011" name="J. Bacteriol.">
        <title>Comparative genomics of 28 Salmonella enterica isolates: evidence for CRISPR-mediated adaptive sublineage evolution.</title>
        <authorList>
            <person name="Fricke W.F."/>
            <person name="Mammel M.K."/>
            <person name="McDermott P.F."/>
            <person name="Tartera C."/>
            <person name="White D.G."/>
            <person name="Leclerc J.E."/>
            <person name="Ravel J."/>
            <person name="Cebula T.A."/>
        </authorList>
    </citation>
    <scope>NUCLEOTIDE SEQUENCE [LARGE SCALE GENOMIC DNA]</scope>
    <source>
        <strain>SL476</strain>
    </source>
</reference>
<dbReference type="EC" id="2.5.1.75" evidence="1"/>
<dbReference type="EMBL" id="CP001120">
    <property type="protein sequence ID" value="ACF67513.1"/>
    <property type="molecule type" value="Genomic_DNA"/>
</dbReference>
<dbReference type="RefSeq" id="WP_001000736.1">
    <property type="nucleotide sequence ID" value="NC_011083.1"/>
</dbReference>
<dbReference type="SMR" id="B4TFA5"/>
<dbReference type="KEGG" id="seh:SeHA_C4778"/>
<dbReference type="HOGENOM" id="CLU_032616_0_0_6"/>
<dbReference type="Proteomes" id="UP000001866">
    <property type="component" value="Chromosome"/>
</dbReference>
<dbReference type="GO" id="GO:0005524">
    <property type="term" value="F:ATP binding"/>
    <property type="evidence" value="ECO:0007669"/>
    <property type="project" value="UniProtKB-UniRule"/>
</dbReference>
<dbReference type="GO" id="GO:0052381">
    <property type="term" value="F:tRNA dimethylallyltransferase activity"/>
    <property type="evidence" value="ECO:0007669"/>
    <property type="project" value="UniProtKB-UniRule"/>
</dbReference>
<dbReference type="GO" id="GO:0006400">
    <property type="term" value="P:tRNA modification"/>
    <property type="evidence" value="ECO:0007669"/>
    <property type="project" value="TreeGrafter"/>
</dbReference>
<dbReference type="FunFam" id="1.10.20.140:FF:000001">
    <property type="entry name" value="tRNA dimethylallyltransferase"/>
    <property type="match status" value="1"/>
</dbReference>
<dbReference type="FunFam" id="1.10.287.890:FF:000001">
    <property type="entry name" value="tRNA dimethylallyltransferase"/>
    <property type="match status" value="1"/>
</dbReference>
<dbReference type="Gene3D" id="1.10.20.140">
    <property type="match status" value="1"/>
</dbReference>
<dbReference type="Gene3D" id="1.10.287.890">
    <property type="entry name" value="Crystal structure of tRNA isopentenylpyrophosphate transferase (bh2366) domain"/>
    <property type="match status" value="1"/>
</dbReference>
<dbReference type="Gene3D" id="3.40.50.300">
    <property type="entry name" value="P-loop containing nucleotide triphosphate hydrolases"/>
    <property type="match status" value="1"/>
</dbReference>
<dbReference type="HAMAP" id="MF_00185">
    <property type="entry name" value="IPP_trans"/>
    <property type="match status" value="1"/>
</dbReference>
<dbReference type="InterPro" id="IPR039657">
    <property type="entry name" value="Dimethylallyltransferase"/>
</dbReference>
<dbReference type="InterPro" id="IPR018022">
    <property type="entry name" value="IPT"/>
</dbReference>
<dbReference type="InterPro" id="IPR027417">
    <property type="entry name" value="P-loop_NTPase"/>
</dbReference>
<dbReference type="NCBIfam" id="TIGR00174">
    <property type="entry name" value="miaA"/>
    <property type="match status" value="1"/>
</dbReference>
<dbReference type="PANTHER" id="PTHR11088">
    <property type="entry name" value="TRNA DIMETHYLALLYLTRANSFERASE"/>
    <property type="match status" value="1"/>
</dbReference>
<dbReference type="PANTHER" id="PTHR11088:SF60">
    <property type="entry name" value="TRNA DIMETHYLALLYLTRANSFERASE"/>
    <property type="match status" value="1"/>
</dbReference>
<dbReference type="Pfam" id="PF01715">
    <property type="entry name" value="IPPT"/>
    <property type="match status" value="1"/>
</dbReference>
<dbReference type="SUPFAM" id="SSF52540">
    <property type="entry name" value="P-loop containing nucleoside triphosphate hydrolases"/>
    <property type="match status" value="1"/>
</dbReference>
<proteinExistence type="inferred from homology"/>
<comment type="function">
    <text evidence="1">Catalyzes the transfer of a dimethylallyl group onto the adenine at position 37 in tRNAs that read codons beginning with uridine, leading to the formation of N6-(dimethylallyl)adenosine (i(6)A).</text>
</comment>
<comment type="catalytic activity">
    <reaction evidence="1">
        <text>adenosine(37) in tRNA + dimethylallyl diphosphate = N(6)-dimethylallyladenosine(37) in tRNA + diphosphate</text>
        <dbReference type="Rhea" id="RHEA:26482"/>
        <dbReference type="Rhea" id="RHEA-COMP:10162"/>
        <dbReference type="Rhea" id="RHEA-COMP:10375"/>
        <dbReference type="ChEBI" id="CHEBI:33019"/>
        <dbReference type="ChEBI" id="CHEBI:57623"/>
        <dbReference type="ChEBI" id="CHEBI:74411"/>
        <dbReference type="ChEBI" id="CHEBI:74415"/>
        <dbReference type="EC" id="2.5.1.75"/>
    </reaction>
</comment>
<comment type="cofactor">
    <cofactor evidence="1">
        <name>Mg(2+)</name>
        <dbReference type="ChEBI" id="CHEBI:18420"/>
    </cofactor>
</comment>
<comment type="subunit">
    <text evidence="1">Monomer.</text>
</comment>
<comment type="similarity">
    <text evidence="1">Belongs to the IPP transferase family.</text>
</comment>
<keyword id="KW-0067">ATP-binding</keyword>
<keyword id="KW-0460">Magnesium</keyword>
<keyword id="KW-0547">Nucleotide-binding</keyword>
<keyword id="KW-0808">Transferase</keyword>
<keyword id="KW-0819">tRNA processing</keyword>
<feature type="chain" id="PRO_1000098685" description="tRNA dimethylallyltransferase">
    <location>
        <begin position="1"/>
        <end position="316"/>
    </location>
</feature>
<feature type="region of interest" description="Interaction with substrate tRNA" evidence="1">
    <location>
        <begin position="42"/>
        <end position="45"/>
    </location>
</feature>
<feature type="region of interest" description="Interaction with substrate tRNA" evidence="1">
    <location>
        <begin position="166"/>
        <end position="170"/>
    </location>
</feature>
<feature type="region of interest" description="Interaction with substrate tRNA" evidence="1">
    <location>
        <begin position="247"/>
        <end position="252"/>
    </location>
</feature>
<feature type="binding site" evidence="1">
    <location>
        <begin position="17"/>
        <end position="24"/>
    </location>
    <ligand>
        <name>ATP</name>
        <dbReference type="ChEBI" id="CHEBI:30616"/>
    </ligand>
</feature>
<feature type="binding site" evidence="1">
    <location>
        <begin position="19"/>
        <end position="24"/>
    </location>
    <ligand>
        <name>substrate</name>
    </ligand>
</feature>
<feature type="site" description="Interaction with substrate tRNA" evidence="1">
    <location>
        <position position="108"/>
    </location>
</feature>
<feature type="site" description="Interaction with substrate tRNA" evidence="1">
    <location>
        <position position="130"/>
    </location>
</feature>
<organism>
    <name type="scientific">Salmonella heidelberg (strain SL476)</name>
    <dbReference type="NCBI Taxonomy" id="454169"/>
    <lineage>
        <taxon>Bacteria</taxon>
        <taxon>Pseudomonadati</taxon>
        <taxon>Pseudomonadota</taxon>
        <taxon>Gammaproteobacteria</taxon>
        <taxon>Enterobacterales</taxon>
        <taxon>Enterobacteriaceae</taxon>
        <taxon>Salmonella</taxon>
    </lineage>
</organism>
<sequence length="316" mass="35186">MNDVSKASLPKAIFLMGPTASGKTALAIELRKVLPVELISVDSALIYRGMDIGTAKPNADELKAAPHRLLDIRDPSQAYSAADFRRDALAQMAEITSAGRIPLLVGGTMLYFKALLEGLSPLPSADPEVRSRIEQQAAELGWEALHQQLQEIDPVAAARIHPNDPQRLSRALEVFFISGKTLTELTQTSGDALPYQVHQFAIAPASRELLHQRIELRFHQMLASGFEAEVRALFARGDLHTDLPSIRCVGYRQMWSYIEGEISYDEMVYRGVCATRQLAKRQMTWLRGWEGVRWLDSENPDRARKEVLQVVGAIAD</sequence>
<evidence type="ECO:0000255" key="1">
    <source>
        <dbReference type="HAMAP-Rule" id="MF_00185"/>
    </source>
</evidence>
<gene>
    <name evidence="1" type="primary">miaA</name>
    <name type="ordered locus">SeHA_C4778</name>
</gene>
<accession>B4TFA5</accession>